<protein>
    <recommendedName>
        <fullName evidence="1">Co-chaperonin GroES 1</fullName>
    </recommendedName>
    <alternativeName>
        <fullName evidence="1">10 kDa chaperonin 1</fullName>
    </alternativeName>
    <alternativeName>
        <fullName evidence="1">Chaperonin-10 1</fullName>
        <shortName evidence="1">Cpn10 1</shortName>
    </alternativeName>
</protein>
<keyword id="KW-0143">Chaperone</keyword>
<keyword id="KW-0963">Cytoplasm</keyword>
<proteinExistence type="inferred from homology"/>
<evidence type="ECO:0000255" key="1">
    <source>
        <dbReference type="HAMAP-Rule" id="MF_00580"/>
    </source>
</evidence>
<evidence type="ECO:0000305" key="2"/>
<organism>
    <name type="scientific">Mesorhizobium japonicum (strain LMG 29417 / CECT 9101 / MAFF 303099)</name>
    <name type="common">Mesorhizobium loti (strain MAFF 303099)</name>
    <dbReference type="NCBI Taxonomy" id="266835"/>
    <lineage>
        <taxon>Bacteria</taxon>
        <taxon>Pseudomonadati</taxon>
        <taxon>Pseudomonadota</taxon>
        <taxon>Alphaproteobacteria</taxon>
        <taxon>Hyphomicrobiales</taxon>
        <taxon>Phyllobacteriaceae</taxon>
        <taxon>Mesorhizobium</taxon>
    </lineage>
</organism>
<comment type="function">
    <text evidence="1">Together with the chaperonin GroEL, plays an essential role in assisting protein folding. The GroEL-GroES system forms a nano-cage that allows encapsulation of the non-native substrate proteins and provides a physical environment optimized to promote and accelerate protein folding. GroES binds to the apical surface of the GroEL ring, thereby capping the opening of the GroEL channel.</text>
</comment>
<comment type="subunit">
    <text evidence="1">Heptamer of 7 subunits arranged in a ring. Interacts with the chaperonin GroEL.</text>
</comment>
<comment type="subcellular location">
    <subcellularLocation>
        <location evidence="1">Cytoplasm</location>
    </subcellularLocation>
</comment>
<comment type="similarity">
    <text evidence="1 2">Belongs to the GroES chaperonin family.</text>
</comment>
<accession>Q98IV4</accession>
<gene>
    <name evidence="1" type="primary">groES1</name>
    <name evidence="1" type="synonym">groS1</name>
    <name type="ordered locus">mll2233</name>
</gene>
<feature type="chain" id="PRO_0000174812" description="Co-chaperonin GroES 1">
    <location>
        <begin position="1"/>
        <end position="104"/>
    </location>
</feature>
<name>CH101_RHILO</name>
<dbReference type="EMBL" id="BA000012">
    <property type="protein sequence ID" value="BAB49412.1"/>
    <property type="molecule type" value="Genomic_DNA"/>
</dbReference>
<dbReference type="RefSeq" id="WP_010910764.1">
    <property type="nucleotide sequence ID" value="NC_002678.2"/>
</dbReference>
<dbReference type="SMR" id="Q98IV4"/>
<dbReference type="KEGG" id="mlo:mll2233"/>
<dbReference type="eggNOG" id="COG0234">
    <property type="taxonomic scope" value="Bacteria"/>
</dbReference>
<dbReference type="HOGENOM" id="CLU_132825_1_0_5"/>
<dbReference type="Proteomes" id="UP000000552">
    <property type="component" value="Chromosome"/>
</dbReference>
<dbReference type="GO" id="GO:0005737">
    <property type="term" value="C:cytoplasm"/>
    <property type="evidence" value="ECO:0007669"/>
    <property type="project" value="UniProtKB-SubCell"/>
</dbReference>
<dbReference type="GO" id="GO:0005524">
    <property type="term" value="F:ATP binding"/>
    <property type="evidence" value="ECO:0007669"/>
    <property type="project" value="InterPro"/>
</dbReference>
<dbReference type="GO" id="GO:0046872">
    <property type="term" value="F:metal ion binding"/>
    <property type="evidence" value="ECO:0007669"/>
    <property type="project" value="TreeGrafter"/>
</dbReference>
<dbReference type="GO" id="GO:0044183">
    <property type="term" value="F:protein folding chaperone"/>
    <property type="evidence" value="ECO:0007669"/>
    <property type="project" value="InterPro"/>
</dbReference>
<dbReference type="GO" id="GO:0051087">
    <property type="term" value="F:protein-folding chaperone binding"/>
    <property type="evidence" value="ECO:0007669"/>
    <property type="project" value="TreeGrafter"/>
</dbReference>
<dbReference type="GO" id="GO:0051082">
    <property type="term" value="F:unfolded protein binding"/>
    <property type="evidence" value="ECO:0007669"/>
    <property type="project" value="TreeGrafter"/>
</dbReference>
<dbReference type="GO" id="GO:0051085">
    <property type="term" value="P:chaperone cofactor-dependent protein refolding"/>
    <property type="evidence" value="ECO:0007669"/>
    <property type="project" value="TreeGrafter"/>
</dbReference>
<dbReference type="CDD" id="cd00320">
    <property type="entry name" value="cpn10"/>
    <property type="match status" value="1"/>
</dbReference>
<dbReference type="FunFam" id="2.30.33.40:FF:000001">
    <property type="entry name" value="10 kDa chaperonin"/>
    <property type="match status" value="1"/>
</dbReference>
<dbReference type="Gene3D" id="2.30.33.40">
    <property type="entry name" value="GroES chaperonin"/>
    <property type="match status" value="1"/>
</dbReference>
<dbReference type="HAMAP" id="MF_00580">
    <property type="entry name" value="CH10"/>
    <property type="match status" value="1"/>
</dbReference>
<dbReference type="InterPro" id="IPR020818">
    <property type="entry name" value="Chaperonin_GroES"/>
</dbReference>
<dbReference type="InterPro" id="IPR037124">
    <property type="entry name" value="Chaperonin_GroES_sf"/>
</dbReference>
<dbReference type="InterPro" id="IPR018369">
    <property type="entry name" value="Chaprnonin_Cpn10_CS"/>
</dbReference>
<dbReference type="InterPro" id="IPR011032">
    <property type="entry name" value="GroES-like_sf"/>
</dbReference>
<dbReference type="NCBIfam" id="NF001527">
    <property type="entry name" value="PRK00364.1-2"/>
    <property type="match status" value="1"/>
</dbReference>
<dbReference type="NCBIfam" id="NF001529">
    <property type="entry name" value="PRK00364.1-5"/>
    <property type="match status" value="1"/>
</dbReference>
<dbReference type="NCBIfam" id="NF001531">
    <property type="entry name" value="PRK00364.2-2"/>
    <property type="match status" value="1"/>
</dbReference>
<dbReference type="NCBIfam" id="NF001533">
    <property type="entry name" value="PRK00364.2-4"/>
    <property type="match status" value="1"/>
</dbReference>
<dbReference type="PANTHER" id="PTHR10772">
    <property type="entry name" value="10 KDA HEAT SHOCK PROTEIN"/>
    <property type="match status" value="1"/>
</dbReference>
<dbReference type="PANTHER" id="PTHR10772:SF58">
    <property type="entry name" value="CO-CHAPERONIN GROES"/>
    <property type="match status" value="1"/>
</dbReference>
<dbReference type="Pfam" id="PF00166">
    <property type="entry name" value="Cpn10"/>
    <property type="match status" value="1"/>
</dbReference>
<dbReference type="PRINTS" id="PR00297">
    <property type="entry name" value="CHAPERONIN10"/>
</dbReference>
<dbReference type="SMART" id="SM00883">
    <property type="entry name" value="Cpn10"/>
    <property type="match status" value="1"/>
</dbReference>
<dbReference type="SUPFAM" id="SSF50129">
    <property type="entry name" value="GroES-like"/>
    <property type="match status" value="1"/>
</dbReference>
<dbReference type="PROSITE" id="PS00681">
    <property type="entry name" value="CHAPERONINS_CPN10"/>
    <property type="match status" value="1"/>
</dbReference>
<sequence length="104" mass="11178">MKFRPLHDRVVIRRAEGDTKSKGGIIIPDNAKEKPQEGEVIAVGPGARDENGALVPLDVKAGDLILFGKWSGTEVKIDGEDLLIMKEADIMGVIDKSVEAKKAA</sequence>
<reference key="1">
    <citation type="journal article" date="2000" name="DNA Res.">
        <title>Complete genome structure of the nitrogen-fixing symbiotic bacterium Mesorhizobium loti.</title>
        <authorList>
            <person name="Kaneko T."/>
            <person name="Nakamura Y."/>
            <person name="Sato S."/>
            <person name="Asamizu E."/>
            <person name="Kato T."/>
            <person name="Sasamoto S."/>
            <person name="Watanabe A."/>
            <person name="Idesawa K."/>
            <person name="Ishikawa A."/>
            <person name="Kawashima K."/>
            <person name="Kimura T."/>
            <person name="Kishida Y."/>
            <person name="Kiyokawa C."/>
            <person name="Kohara M."/>
            <person name="Matsumoto M."/>
            <person name="Matsuno A."/>
            <person name="Mochizuki Y."/>
            <person name="Nakayama S."/>
            <person name="Nakazaki N."/>
            <person name="Shimpo S."/>
            <person name="Sugimoto M."/>
            <person name="Takeuchi C."/>
            <person name="Yamada M."/>
            <person name="Tabata S."/>
        </authorList>
    </citation>
    <scope>NUCLEOTIDE SEQUENCE [LARGE SCALE GENOMIC DNA]</scope>
    <source>
        <strain>LMG 29417 / CECT 9101 / MAFF 303099</strain>
    </source>
</reference>